<proteinExistence type="inferred from homology"/>
<comment type="similarity">
    <text evidence="2">Belongs to the NDRG family.</text>
</comment>
<feature type="chain" id="PRO_0000159583" description="Uncharacterized protein ZK1073.1">
    <location>
        <begin position="1"/>
        <end position="325"/>
    </location>
</feature>
<feature type="region of interest" description="Disordered" evidence="1">
    <location>
        <begin position="296"/>
        <end position="325"/>
    </location>
</feature>
<organism>
    <name type="scientific">Caenorhabditis elegans</name>
    <dbReference type="NCBI Taxonomy" id="6239"/>
    <lineage>
        <taxon>Eukaryota</taxon>
        <taxon>Metazoa</taxon>
        <taxon>Ecdysozoa</taxon>
        <taxon>Nematoda</taxon>
        <taxon>Chromadorea</taxon>
        <taxon>Rhabditida</taxon>
        <taxon>Rhabditina</taxon>
        <taxon>Rhabditomorpha</taxon>
        <taxon>Rhabditoidea</taxon>
        <taxon>Rhabditidae</taxon>
        <taxon>Peloderinae</taxon>
        <taxon>Caenorhabditis</taxon>
    </lineage>
</organism>
<sequence>MSEDNLQMVVVQAQNCGVLHVYVQGNLEERGGKTIILTVHDIGTNHKSFVRFVNHPSMATVKEKAIFLHVCVPGQEDNSADFFGDFPTLDGIGDDLSAVLDKFEVKSAIAFGEGVGANIICRFAMGHPNRIMGIVLVHCTSTTAGIIEYCKEKVMNMRLENSIMSDGAWDYLLAHKFGGESKSRQEYLEELKATLNPKNLSKYLVAFTKRTDLSSTIGTKLETVDALLVTGSKASHLHTVYTTHKSMNKKKTTLLVVDNVADVMQEAPDKLARSLILLCKGCGVLSGVAIPGMERQRTLSSSMEEADRPRRMSVTQPHLPPVPSA</sequence>
<reference key="1">
    <citation type="journal article" date="1998" name="Science">
        <title>Genome sequence of the nematode C. elegans: a platform for investigating biology.</title>
        <authorList>
            <consortium name="The C. elegans sequencing consortium"/>
        </authorList>
    </citation>
    <scope>NUCLEOTIDE SEQUENCE [LARGE SCALE GENOMIC DNA]</scope>
    <source>
        <strain>Bristol N2</strain>
    </source>
</reference>
<accession>O02485</accession>
<keyword id="KW-1185">Reference proteome</keyword>
<evidence type="ECO:0000256" key="1">
    <source>
        <dbReference type="SAM" id="MobiDB-lite"/>
    </source>
</evidence>
<evidence type="ECO:0000305" key="2"/>
<name>YDJ1_CAEEL</name>
<gene>
    <name type="ORF">ZK1073.1</name>
</gene>
<dbReference type="EMBL" id="Z68135">
    <property type="protein sequence ID" value="CAA92227.1"/>
    <property type="molecule type" value="Genomic_DNA"/>
</dbReference>
<dbReference type="PIR" id="T27688">
    <property type="entry name" value="T27688"/>
</dbReference>
<dbReference type="RefSeq" id="NP_510634.1">
    <property type="nucleotide sequence ID" value="NM_078233.6"/>
</dbReference>
<dbReference type="SMR" id="O02485"/>
<dbReference type="BioGRID" id="46576">
    <property type="interactions" value="41"/>
</dbReference>
<dbReference type="FunCoup" id="O02485">
    <property type="interactions" value="1260"/>
</dbReference>
<dbReference type="STRING" id="6239.ZK1073.1.1"/>
<dbReference type="ESTHER" id="caeel-ydj1">
    <property type="family name" value="Ndr_family"/>
</dbReference>
<dbReference type="iPTMnet" id="O02485"/>
<dbReference type="PaxDb" id="6239-ZK1073.1.1"/>
<dbReference type="PeptideAtlas" id="O02485"/>
<dbReference type="EnsemblMetazoa" id="ZK1073.1.1">
    <property type="protein sequence ID" value="ZK1073.1.1"/>
    <property type="gene ID" value="WBGene00014213"/>
</dbReference>
<dbReference type="EnsemblMetazoa" id="ZK1073.1.2">
    <property type="protein sequence ID" value="ZK1073.1.2"/>
    <property type="gene ID" value="WBGene00014213"/>
</dbReference>
<dbReference type="GeneID" id="181689"/>
<dbReference type="KEGG" id="cel:CELE_ZK1073.1"/>
<dbReference type="UCSC" id="ZK1073.1.1">
    <property type="organism name" value="c. elegans"/>
</dbReference>
<dbReference type="AGR" id="WB:WBGene00014213"/>
<dbReference type="CTD" id="181689"/>
<dbReference type="WormBase" id="ZK1073.1">
    <property type="protein sequence ID" value="CE03845"/>
    <property type="gene ID" value="WBGene00014213"/>
</dbReference>
<dbReference type="eggNOG" id="KOG2931">
    <property type="taxonomic scope" value="Eukaryota"/>
</dbReference>
<dbReference type="GeneTree" id="ENSGT00950000182872"/>
<dbReference type="HOGENOM" id="CLU_035361_5_0_1"/>
<dbReference type="InParanoid" id="O02485"/>
<dbReference type="OMA" id="TTHKSMN"/>
<dbReference type="OrthoDB" id="191979at2759"/>
<dbReference type="PhylomeDB" id="O02485"/>
<dbReference type="PRO" id="PR:O02485"/>
<dbReference type="Proteomes" id="UP000001940">
    <property type="component" value="Chromosome X"/>
</dbReference>
<dbReference type="Bgee" id="WBGene00014213">
    <property type="expression patterns" value="Expressed in pharyngeal muscle cell (C elegans) and 4 other cell types or tissues"/>
</dbReference>
<dbReference type="GO" id="GO:0005737">
    <property type="term" value="C:cytoplasm"/>
    <property type="evidence" value="ECO:0000318"/>
    <property type="project" value="GO_Central"/>
</dbReference>
<dbReference type="GO" id="GO:0007165">
    <property type="term" value="P:signal transduction"/>
    <property type="evidence" value="ECO:0000318"/>
    <property type="project" value="GO_Central"/>
</dbReference>
<dbReference type="Gene3D" id="3.40.50.1820">
    <property type="entry name" value="alpha/beta hydrolase"/>
    <property type="match status" value="1"/>
</dbReference>
<dbReference type="InterPro" id="IPR029058">
    <property type="entry name" value="AB_hydrolase_fold"/>
</dbReference>
<dbReference type="InterPro" id="IPR004142">
    <property type="entry name" value="NDRG"/>
</dbReference>
<dbReference type="PANTHER" id="PTHR11034">
    <property type="entry name" value="N-MYC DOWNSTREAM REGULATED"/>
    <property type="match status" value="1"/>
</dbReference>
<dbReference type="Pfam" id="PF03096">
    <property type="entry name" value="Ndr"/>
    <property type="match status" value="1"/>
</dbReference>
<dbReference type="SUPFAM" id="SSF53474">
    <property type="entry name" value="alpha/beta-Hydrolases"/>
    <property type="match status" value="1"/>
</dbReference>
<protein>
    <recommendedName>
        <fullName>Uncharacterized protein ZK1073.1</fullName>
    </recommendedName>
</protein>